<proteinExistence type="inferred from homology"/>
<sequence>MSDNAAFKFGSFDYICEHAALVVCPMLGDQQGMAPTCYSRNVQLGSQIIFQPATCILHIAALVMATIMLLHVRSKYTAVGRKEIVLFFYMYIWVELFAIFLDSAIIPTANKVYPWFAAIYAGSVGALYWCLLLNGFVGFQFHEDGTPMSLWFLRISSLVVGAVCFGIPVATFKGTSSSMSPTNTVGLFITYLVFPCVCVLIYFISQMLLVVRTLDDRWVIGDLLFMAGFYIAGVLLLVTFSVTICDAVKHYVDGVFFSTLAFLFAVMMVYKYWDSITKEDLEFSVGSKQAVWDVKDPLLATGMEYYEDDAQSAYRGAGGSLVGGYNGNQYYGNQPGYAQSAYGQQGYGQYGAGGGYGQGHY</sequence>
<feature type="chain" id="PRO_0000280575" description="Chitin synthase export chaperone">
    <location>
        <begin position="1"/>
        <end position="361"/>
    </location>
</feature>
<feature type="transmembrane region" description="Helical" evidence="2">
    <location>
        <begin position="48"/>
        <end position="68"/>
    </location>
</feature>
<feature type="transmembrane region" description="Helical" evidence="2">
    <location>
        <begin position="86"/>
        <end position="106"/>
    </location>
</feature>
<feature type="transmembrane region" description="Helical" evidence="2">
    <location>
        <begin position="119"/>
        <end position="139"/>
    </location>
</feature>
<feature type="transmembrane region" description="Helical" evidence="2">
    <location>
        <begin position="150"/>
        <end position="170"/>
    </location>
</feature>
<feature type="transmembrane region" description="Helical" evidence="2">
    <location>
        <begin position="184"/>
        <end position="204"/>
    </location>
</feature>
<feature type="transmembrane region" description="Helical" evidence="2">
    <location>
        <begin position="218"/>
        <end position="238"/>
    </location>
</feature>
<feature type="transmembrane region" description="Helical" evidence="2">
    <location>
        <begin position="250"/>
        <end position="270"/>
    </location>
</feature>
<gene>
    <name type="primary">CHS7</name>
    <name type="ordered locus">CNK00300</name>
</gene>
<reference key="1">
    <citation type="journal article" date="2005" name="Science">
        <title>The genome of the basidiomycetous yeast and human pathogen Cryptococcus neoformans.</title>
        <authorList>
            <person name="Loftus B.J."/>
            <person name="Fung E."/>
            <person name="Roncaglia P."/>
            <person name="Rowley D."/>
            <person name="Amedeo P."/>
            <person name="Bruno D."/>
            <person name="Vamathevan J."/>
            <person name="Miranda M."/>
            <person name="Anderson I.J."/>
            <person name="Fraser J.A."/>
            <person name="Allen J.E."/>
            <person name="Bosdet I.E."/>
            <person name="Brent M.R."/>
            <person name="Chiu R."/>
            <person name="Doering T.L."/>
            <person name="Donlin M.J."/>
            <person name="D'Souza C.A."/>
            <person name="Fox D.S."/>
            <person name="Grinberg V."/>
            <person name="Fu J."/>
            <person name="Fukushima M."/>
            <person name="Haas B.J."/>
            <person name="Huang J.C."/>
            <person name="Janbon G."/>
            <person name="Jones S.J.M."/>
            <person name="Koo H.L."/>
            <person name="Krzywinski M.I."/>
            <person name="Kwon-Chung K.J."/>
            <person name="Lengeler K.B."/>
            <person name="Maiti R."/>
            <person name="Marra M.A."/>
            <person name="Marra R.E."/>
            <person name="Mathewson C.A."/>
            <person name="Mitchell T.G."/>
            <person name="Pertea M."/>
            <person name="Riggs F.R."/>
            <person name="Salzberg S.L."/>
            <person name="Schein J.E."/>
            <person name="Shvartsbeyn A."/>
            <person name="Shin H."/>
            <person name="Shumway M."/>
            <person name="Specht C.A."/>
            <person name="Suh B.B."/>
            <person name="Tenney A."/>
            <person name="Utterback T.R."/>
            <person name="Wickes B.L."/>
            <person name="Wortman J.R."/>
            <person name="Wye N.H."/>
            <person name="Kronstad J.W."/>
            <person name="Lodge J.K."/>
            <person name="Heitman J."/>
            <person name="Davis R.W."/>
            <person name="Fraser C.M."/>
            <person name="Hyman R.W."/>
        </authorList>
    </citation>
    <scope>NUCLEOTIDE SEQUENCE [LARGE SCALE GENOMIC DNA]</scope>
    <source>
        <strain>JEC21 / ATCC MYA-565</strain>
    </source>
</reference>
<evidence type="ECO:0000250" key="1"/>
<evidence type="ECO:0000255" key="2"/>
<evidence type="ECO:0000305" key="3"/>
<name>CHS7_CRYNJ</name>
<organism>
    <name type="scientific">Cryptococcus neoformans var. neoformans serotype D (strain JEC21 / ATCC MYA-565)</name>
    <name type="common">Filobasidiella neoformans</name>
    <dbReference type="NCBI Taxonomy" id="214684"/>
    <lineage>
        <taxon>Eukaryota</taxon>
        <taxon>Fungi</taxon>
        <taxon>Dikarya</taxon>
        <taxon>Basidiomycota</taxon>
        <taxon>Agaricomycotina</taxon>
        <taxon>Tremellomycetes</taxon>
        <taxon>Tremellales</taxon>
        <taxon>Cryptococcaceae</taxon>
        <taxon>Cryptococcus</taxon>
        <taxon>Cryptococcus neoformans species complex</taxon>
    </lineage>
</organism>
<keyword id="KW-0961">Cell wall biogenesis/degradation</keyword>
<keyword id="KW-0256">Endoplasmic reticulum</keyword>
<keyword id="KW-0472">Membrane</keyword>
<keyword id="KW-0653">Protein transport</keyword>
<keyword id="KW-1185">Reference proteome</keyword>
<keyword id="KW-0812">Transmembrane</keyword>
<keyword id="KW-1133">Transmembrane helix</keyword>
<keyword id="KW-0813">Transport</keyword>
<protein>
    <recommendedName>
        <fullName>Chitin synthase export chaperone</fullName>
    </recommendedName>
</protein>
<accession>P0CM72</accession>
<accession>Q55JM1</accession>
<accession>Q5K9Y1</accession>
<dbReference type="EMBL" id="AE017351">
    <property type="protein sequence ID" value="AAW46083.1"/>
    <property type="molecule type" value="Genomic_DNA"/>
</dbReference>
<dbReference type="RefSeq" id="XP_567600.1">
    <property type="nucleotide sequence ID" value="XM_567600.1"/>
</dbReference>
<dbReference type="STRING" id="214684.P0CM72"/>
<dbReference type="PaxDb" id="214684-P0CM72"/>
<dbReference type="EnsemblFungi" id="AAW46083">
    <property type="protein sequence ID" value="AAW46083"/>
    <property type="gene ID" value="CNK00300"/>
</dbReference>
<dbReference type="GeneID" id="3254493"/>
<dbReference type="KEGG" id="cne:CNK00300"/>
<dbReference type="VEuPathDB" id="FungiDB:CNK00300"/>
<dbReference type="eggNOG" id="ENOG502QRVH">
    <property type="taxonomic scope" value="Eukaryota"/>
</dbReference>
<dbReference type="HOGENOM" id="CLU_050424_1_0_1"/>
<dbReference type="InParanoid" id="P0CM72"/>
<dbReference type="OMA" id="NFNGICK"/>
<dbReference type="OrthoDB" id="2189463at2759"/>
<dbReference type="Proteomes" id="UP000002149">
    <property type="component" value="Chromosome 11"/>
</dbReference>
<dbReference type="GO" id="GO:0005789">
    <property type="term" value="C:endoplasmic reticulum membrane"/>
    <property type="evidence" value="ECO:0000318"/>
    <property type="project" value="GO_Central"/>
</dbReference>
<dbReference type="GO" id="GO:0051082">
    <property type="term" value="F:unfolded protein binding"/>
    <property type="evidence" value="ECO:0000318"/>
    <property type="project" value="GO_Central"/>
</dbReference>
<dbReference type="GO" id="GO:0071555">
    <property type="term" value="P:cell wall organization"/>
    <property type="evidence" value="ECO:0007669"/>
    <property type="project" value="UniProtKB-KW"/>
</dbReference>
<dbReference type="GO" id="GO:0006031">
    <property type="term" value="P:chitin biosynthetic process"/>
    <property type="evidence" value="ECO:0000318"/>
    <property type="project" value="GO_Central"/>
</dbReference>
<dbReference type="GO" id="GO:0006457">
    <property type="term" value="P:protein folding"/>
    <property type="evidence" value="ECO:0000318"/>
    <property type="project" value="GO_Central"/>
</dbReference>
<dbReference type="GO" id="GO:0015031">
    <property type="term" value="P:protein transport"/>
    <property type="evidence" value="ECO:0007669"/>
    <property type="project" value="UniProtKB-KW"/>
</dbReference>
<dbReference type="InterPro" id="IPR022057">
    <property type="entry name" value="Chs7"/>
</dbReference>
<dbReference type="PANTHER" id="PTHR35329">
    <property type="entry name" value="CHITIN SYNTHASE EXPORT CHAPERONE"/>
    <property type="match status" value="1"/>
</dbReference>
<dbReference type="PANTHER" id="PTHR35329:SF2">
    <property type="entry name" value="CHITIN SYNTHASE EXPORT CHAPERONE"/>
    <property type="match status" value="1"/>
</dbReference>
<dbReference type="Pfam" id="PF12271">
    <property type="entry name" value="Chs7"/>
    <property type="match status" value="1"/>
</dbReference>
<comment type="function">
    <text evidence="1">Chaperone required for the export of the chitin synthase CHS3 from the endoplasmic reticulum.</text>
</comment>
<comment type="subunit">
    <text evidence="1">Interacts with CHS3.</text>
</comment>
<comment type="subcellular location">
    <subcellularLocation>
        <location evidence="1">Endoplasmic reticulum membrane</location>
        <topology evidence="1">Multi-pass membrane protein</topology>
    </subcellularLocation>
</comment>
<comment type="similarity">
    <text evidence="3">Belongs to the CHS7 family.</text>
</comment>